<name>SCX1_ORTSC</name>
<protein>
    <recommendedName>
        <fullName>Toxin Os1</fullName>
        <shortName>Os-1</shortName>
    </recommendedName>
</protein>
<reference key="1">
    <citation type="journal article" date="1986" name="Bioorg. Khim.">
        <title>Complete amino acid sequence of neurotoxin Os-1 from the venom of the Central Asian black scorpion Orthochirus scrobiculosus.</title>
        <authorList>
            <person name="Potapenko N.A."/>
            <person name="Volkova T.M."/>
            <person name="Garsia A.F."/>
            <person name="Galkina T.G."/>
            <person name="Dulubova I.E."/>
            <person name="Grishin E.V."/>
        </authorList>
    </citation>
    <scope>PROTEIN SEQUENCE</scope>
    <source>
        <tissue>Venom</tissue>
    </source>
</reference>
<feature type="chain" id="PRO_0000066789" description="Toxin Os1">
    <location>
        <begin position="1"/>
        <end position="66"/>
    </location>
</feature>
<feature type="domain" description="LCN-type CS-alpha/beta" evidence="2">
    <location>
        <begin position="2"/>
        <end position="66"/>
    </location>
</feature>
<feature type="disulfide bond" evidence="2">
    <location>
        <begin position="12"/>
        <end position="65"/>
    </location>
</feature>
<feature type="disulfide bond" evidence="2">
    <location>
        <begin position="16"/>
        <end position="37"/>
    </location>
</feature>
<feature type="disulfide bond" evidence="2">
    <location>
        <begin position="22"/>
        <end position="47"/>
    </location>
</feature>
<feature type="disulfide bond" evidence="2">
    <location>
        <begin position="26"/>
        <end position="49"/>
    </location>
</feature>
<sequence>ERDGYIVQLHNCVYHCGLNPYCNGLCTKNGATSGSYCQWMTKWGNACYCYALPDKVPIKWLDPKCY</sequence>
<accession>P15224</accession>
<comment type="function">
    <text evidence="1">Alpha toxins bind voltage-independently at site-3 of sodium channels (Nav) and inhibit the inactivation of the activated channels, thereby blocking neuronal transmission (By similarity). This toxin possesses a high paralytic activity against mice.</text>
</comment>
<comment type="subcellular location">
    <subcellularLocation>
        <location>Secreted</location>
    </subcellularLocation>
</comment>
<comment type="tissue specificity">
    <text>Expressed by the venom gland.</text>
</comment>
<comment type="domain">
    <text evidence="3">Has the structural arrangement of an alpha-helix connected to antiparallel beta-sheets by disulfide bonds (CS-alpha/beta).</text>
</comment>
<comment type="similarity">
    <text evidence="3">Belongs to the long (4 C-C) scorpion toxin superfamily. Sodium channel inhibitor family. Alpha subfamily.</text>
</comment>
<proteinExistence type="evidence at protein level"/>
<keyword id="KW-0903">Direct protein sequencing</keyword>
<keyword id="KW-1015">Disulfide bond</keyword>
<keyword id="KW-0872">Ion channel impairing toxin</keyword>
<keyword id="KW-0528">Neurotoxin</keyword>
<keyword id="KW-0964">Secreted</keyword>
<keyword id="KW-0800">Toxin</keyword>
<keyword id="KW-0738">Voltage-gated sodium channel impairing toxin</keyword>
<evidence type="ECO:0000250" key="1"/>
<evidence type="ECO:0000255" key="2">
    <source>
        <dbReference type="PROSITE-ProRule" id="PRU01210"/>
    </source>
</evidence>
<evidence type="ECO:0000305" key="3"/>
<organism>
    <name type="scientific">Orthochirus scrobiculosus</name>
    <name type="common">Central Asian scorpion</name>
    <dbReference type="NCBI Taxonomy" id="6892"/>
    <lineage>
        <taxon>Eukaryota</taxon>
        <taxon>Metazoa</taxon>
        <taxon>Ecdysozoa</taxon>
        <taxon>Arthropoda</taxon>
        <taxon>Chelicerata</taxon>
        <taxon>Arachnida</taxon>
        <taxon>Scorpiones</taxon>
        <taxon>Buthida</taxon>
        <taxon>Buthoidea</taxon>
        <taxon>Buthidae</taxon>
        <taxon>Orthochirus</taxon>
    </lineage>
</organism>
<dbReference type="PIR" id="JN0408">
    <property type="entry name" value="JN0408"/>
</dbReference>
<dbReference type="SMR" id="P15224"/>
<dbReference type="GO" id="GO:0005576">
    <property type="term" value="C:extracellular region"/>
    <property type="evidence" value="ECO:0007669"/>
    <property type="project" value="UniProtKB-SubCell"/>
</dbReference>
<dbReference type="GO" id="GO:0019871">
    <property type="term" value="F:sodium channel inhibitor activity"/>
    <property type="evidence" value="ECO:0007669"/>
    <property type="project" value="InterPro"/>
</dbReference>
<dbReference type="GO" id="GO:0090729">
    <property type="term" value="F:toxin activity"/>
    <property type="evidence" value="ECO:0007669"/>
    <property type="project" value="UniProtKB-KW"/>
</dbReference>
<dbReference type="GO" id="GO:0006952">
    <property type="term" value="P:defense response"/>
    <property type="evidence" value="ECO:0007669"/>
    <property type="project" value="InterPro"/>
</dbReference>
<dbReference type="CDD" id="cd23106">
    <property type="entry name" value="neurotoxins_LC_scorpion"/>
    <property type="match status" value="1"/>
</dbReference>
<dbReference type="Gene3D" id="3.30.30.10">
    <property type="entry name" value="Knottin, scorpion toxin-like"/>
    <property type="match status" value="1"/>
</dbReference>
<dbReference type="InterPro" id="IPR044062">
    <property type="entry name" value="LCN-type_CS_alpha_beta_dom"/>
</dbReference>
<dbReference type="InterPro" id="IPR003614">
    <property type="entry name" value="Scorpion_toxin-like"/>
</dbReference>
<dbReference type="InterPro" id="IPR036574">
    <property type="entry name" value="Scorpion_toxin-like_sf"/>
</dbReference>
<dbReference type="InterPro" id="IPR018218">
    <property type="entry name" value="Scorpion_toxinL"/>
</dbReference>
<dbReference type="InterPro" id="IPR002061">
    <property type="entry name" value="Scorpion_toxinL/defensin"/>
</dbReference>
<dbReference type="Pfam" id="PF00537">
    <property type="entry name" value="Toxin_3"/>
    <property type="match status" value="1"/>
</dbReference>
<dbReference type="PRINTS" id="PR00285">
    <property type="entry name" value="SCORPNTOXIN"/>
</dbReference>
<dbReference type="SMART" id="SM00505">
    <property type="entry name" value="Knot1"/>
    <property type="match status" value="1"/>
</dbReference>
<dbReference type="SUPFAM" id="SSF57095">
    <property type="entry name" value="Scorpion toxin-like"/>
    <property type="match status" value="1"/>
</dbReference>
<dbReference type="PROSITE" id="PS51863">
    <property type="entry name" value="LCN_CSAB"/>
    <property type="match status" value="1"/>
</dbReference>